<evidence type="ECO:0000250" key="1"/>
<evidence type="ECO:0000255" key="2">
    <source>
        <dbReference type="PROSITE-ProRule" id="PRU00794"/>
    </source>
</evidence>
<evidence type="ECO:0000269" key="3">
    <source>
    </source>
</evidence>
<evidence type="ECO:0000269" key="4">
    <source>
    </source>
</evidence>
<evidence type="ECO:0000269" key="5">
    <source>
    </source>
</evidence>
<evidence type="ECO:0000269" key="6">
    <source>
    </source>
</evidence>
<evidence type="ECO:0000303" key="7">
    <source>
    </source>
</evidence>
<evidence type="ECO:0000303" key="8">
    <source>
    </source>
</evidence>
<evidence type="ECO:0000305" key="9"/>
<evidence type="ECO:0000305" key="10">
    <source>
    </source>
</evidence>
<evidence type="ECO:0007829" key="11">
    <source>
        <dbReference type="PDB" id="7DNT"/>
    </source>
</evidence>
<evidence type="ECO:0007829" key="12">
    <source>
        <dbReference type="PDB" id="7DNU"/>
    </source>
</evidence>
<name>DIPP_ASFB7</name>
<gene>
    <name type="ordered locus">Ba71V-102</name>
    <name type="ORF">D250R</name>
</gene>
<comment type="function">
    <text evidence="3 4 5">Decapping enzyme required for the removal of the 5'-end m7GpppN cap tethered to viral and host mRNAs to allow their decay in cells (PubMed:19695654). May therefore accelerate viral and cellular mRNA turnover to eliminate competing host mRNAs and allow stage-specific synthesis of viral proteins. Acceleration of the turnover of cellular transcripts may even promote the shutoff of host protein synthesis (PubMed:29021398). In addition to the mRNA cap, g5R also efficiently hydrolyzes diphosphoinositol polyphosphates. Down-regulation of the level of PP-InsP5 (diphosphoinositol pentakisphosphate) may play a role in viral manipulation of the cellular secretory pathway, a step necessary for the formation of virions (PubMed:11773415). Binds viral and cellular poly(A) mRNAs, thereby decreasing both types of mRNAs (PubMed:19695654, PubMed:29021398).</text>
</comment>
<comment type="catalytic activity">
    <reaction evidence="3">
        <text>diphospho-myo-inositol polyphosphate + H2O = myo-inositol polyphosphate + phosphate.</text>
        <dbReference type="EC" id="3.6.1.52"/>
    </reaction>
</comment>
<comment type="cofactor">
    <cofactor evidence="3">
        <name>Mg(2+)</name>
        <dbReference type="ChEBI" id="CHEBI:18420"/>
    </cofactor>
    <cofactor evidence="3">
        <name>Mn(2+)</name>
        <dbReference type="ChEBI" id="CHEBI:29035"/>
    </cofactor>
</comment>
<comment type="biophysicochemical properties">
    <kinetics>
        <KM evidence="3">1.2 uM for diphosphoinositol pentakisphosphate</KM>
        <KM evidence="3">0.67 mM for GTP</KM>
        <KM evidence="3">0.58 mM for p5A</KM>
        <KM evidence="3">0.92 mM for ATP</KM>
        <KM evidence="3">1.36 mM for p4A</KM>
        <KM evidence="3">1.7 mM for Gp4G</KM>
        <KM evidence="3">3.9 mM for Ap4A</KM>
    </kinetics>
    <phDependence>
        <text evidence="3">Optimum pH is 9.5.</text>
    </phDependence>
</comment>
<comment type="subunit">
    <text evidence="5">Interacts with host RPL23A.</text>
</comment>
<comment type="subcellular location">
    <subcellularLocation>
        <location evidence="3 5">Host rough endoplasmic reticulum</location>
    </subcellularLocation>
    <text evidence="5">Accumulates at the periphery of the viral factories.</text>
</comment>
<comment type="induction">
    <text evidence="5 6">Expressed early and up to late in the infection cycle.</text>
</comment>
<comment type="similarity">
    <text evidence="9">Belongs to the Nudix hydrolase family. DIPP subfamily.</text>
</comment>
<organismHost>
    <name type="scientific">Ornithodoros</name>
    <name type="common">relapsing fever ticks</name>
    <dbReference type="NCBI Taxonomy" id="6937"/>
</organismHost>
<organismHost>
    <name type="scientific">Sus scrofa</name>
    <name type="common">Pig</name>
    <dbReference type="NCBI Taxonomy" id="9823"/>
</organismHost>
<sequence>MDTAMQLKTSIGLITCRMNTQNNQIETILVQKRYSLAFSEFIHCHYSINANQGHLIKMFNNMTINERLLVKTLDFDRMWYHIWIETPVYELYHKKYQKFRKNWLLPDNGKKLISLINQAKGSGTLLWEIPKGKPKEDESDLTCAIREFEEETGITREYYQILPEFKKSMSYFDGKTEYKHIYFLAMLCKSLEEPNMNLSLQYENRIAEISKISWQNMEAVRFISKRQSFNLEPMIGPAFNFIKNYLRYKH</sequence>
<dbReference type="EC" id="3.1.3.-" evidence="4"/>
<dbReference type="EC" id="3.6.1.52" evidence="3"/>
<dbReference type="EMBL" id="L07263">
    <property type="protein sequence ID" value="AAA42693.1"/>
    <property type="molecule type" value="Genomic_DNA"/>
</dbReference>
<dbReference type="EMBL" id="U18466">
    <property type="protein sequence ID" value="AAA65331.1"/>
    <property type="molecule type" value="Genomic_DNA"/>
</dbReference>
<dbReference type="PIR" id="B45391">
    <property type="entry name" value="B45391"/>
</dbReference>
<dbReference type="RefSeq" id="NP_042795.1">
    <property type="nucleotide sequence ID" value="NC_001659.2"/>
</dbReference>
<dbReference type="PDB" id="7DNT">
    <property type="method" value="X-ray"/>
    <property type="resolution" value="2.50 A"/>
    <property type="chains" value="A=1-250"/>
</dbReference>
<dbReference type="PDB" id="7DNU">
    <property type="method" value="X-ray"/>
    <property type="resolution" value="2.25 A"/>
    <property type="chains" value="A=1-250"/>
</dbReference>
<dbReference type="PDB" id="8WQQ">
    <property type="method" value="X-ray"/>
    <property type="resolution" value="2.30 A"/>
    <property type="chains" value="A/B=6-248"/>
</dbReference>
<dbReference type="PDBsum" id="7DNT"/>
<dbReference type="PDBsum" id="7DNU"/>
<dbReference type="PDBsum" id="8WQQ"/>
<dbReference type="SMR" id="P32092"/>
<dbReference type="GeneID" id="22220331"/>
<dbReference type="KEGG" id="vg:22220331"/>
<dbReference type="Proteomes" id="UP000000624">
    <property type="component" value="Segment"/>
</dbReference>
<dbReference type="GO" id="GO:0044168">
    <property type="term" value="C:host cell rough endoplasmic reticulum"/>
    <property type="evidence" value="ECO:0007669"/>
    <property type="project" value="UniProtKB-SubCell"/>
</dbReference>
<dbReference type="GO" id="GO:0004081">
    <property type="term" value="F:bis(5'-nucleosyl)-tetraphosphatase (asymmetrical) activity"/>
    <property type="evidence" value="ECO:0007669"/>
    <property type="project" value="TreeGrafter"/>
</dbReference>
<dbReference type="GO" id="GO:0008486">
    <property type="term" value="F:diphosphoinositol-polyphosphate diphosphatase activity"/>
    <property type="evidence" value="ECO:0007669"/>
    <property type="project" value="UniProtKB-EC"/>
</dbReference>
<dbReference type="GO" id="GO:0046872">
    <property type="term" value="F:metal ion binding"/>
    <property type="evidence" value="ECO:0007669"/>
    <property type="project" value="UniProtKB-KW"/>
</dbReference>
<dbReference type="GO" id="GO:0003723">
    <property type="term" value="F:RNA binding"/>
    <property type="evidence" value="ECO:0007669"/>
    <property type="project" value="UniProtKB-KW"/>
</dbReference>
<dbReference type="GO" id="GO:0006167">
    <property type="term" value="P:AMP biosynthetic process"/>
    <property type="evidence" value="ECO:0007669"/>
    <property type="project" value="TreeGrafter"/>
</dbReference>
<dbReference type="GO" id="GO:0006754">
    <property type="term" value="P:ATP biosynthetic process"/>
    <property type="evidence" value="ECO:0007669"/>
    <property type="project" value="TreeGrafter"/>
</dbReference>
<dbReference type="GO" id="GO:0039657">
    <property type="term" value="P:symbiont-mediated suppression of host gene expression"/>
    <property type="evidence" value="ECO:0007669"/>
    <property type="project" value="UniProtKB-KW"/>
</dbReference>
<dbReference type="Gene3D" id="3.90.79.10">
    <property type="entry name" value="Nucleoside Triphosphate Pyrophosphohydrolase"/>
    <property type="match status" value="1"/>
</dbReference>
<dbReference type="InterPro" id="IPR015797">
    <property type="entry name" value="NUDIX_hydrolase-like_dom_sf"/>
</dbReference>
<dbReference type="InterPro" id="IPR020084">
    <property type="entry name" value="NUDIX_hydrolase_CS"/>
</dbReference>
<dbReference type="InterPro" id="IPR000086">
    <property type="entry name" value="NUDIX_hydrolase_dom"/>
</dbReference>
<dbReference type="InterPro" id="IPR051325">
    <property type="entry name" value="Nudix_hydrolase_domain"/>
</dbReference>
<dbReference type="PANTHER" id="PTHR21340:SF0">
    <property type="entry name" value="BIS(5'-NUCLEOSYL)-TETRAPHOSPHATASE [ASYMMETRICAL]"/>
    <property type="match status" value="1"/>
</dbReference>
<dbReference type="PANTHER" id="PTHR21340">
    <property type="entry name" value="DIADENOSINE 5,5-P1,P4-TETRAPHOSPHATE PYROPHOSPHOHYDROLASE MUTT"/>
    <property type="match status" value="1"/>
</dbReference>
<dbReference type="Pfam" id="PF00293">
    <property type="entry name" value="NUDIX"/>
    <property type="match status" value="1"/>
</dbReference>
<dbReference type="SUPFAM" id="SSF55811">
    <property type="entry name" value="Nudix"/>
    <property type="match status" value="1"/>
</dbReference>
<dbReference type="PROSITE" id="PS51462">
    <property type="entry name" value="NUDIX"/>
    <property type="match status" value="1"/>
</dbReference>
<dbReference type="PROSITE" id="PS00893">
    <property type="entry name" value="NUDIX_BOX"/>
    <property type="match status" value="1"/>
</dbReference>
<accession>P32092</accession>
<keyword id="KW-0002">3D-structure</keyword>
<keyword id="KW-0244">Early protein</keyword>
<keyword id="KW-1262">Eukaryotic host gene expression shutoff by virus</keyword>
<keyword id="KW-1038">Host endoplasmic reticulum</keyword>
<keyword id="KW-1190">Host gene expression shutoff by virus</keyword>
<keyword id="KW-0945">Host-virus interaction</keyword>
<keyword id="KW-0378">Hydrolase</keyword>
<keyword id="KW-0426">Late protein</keyword>
<keyword id="KW-0460">Magnesium</keyword>
<keyword id="KW-0464">Manganese</keyword>
<keyword id="KW-0479">Metal-binding</keyword>
<keyword id="KW-0511">Multifunctional enzyme</keyword>
<keyword id="KW-1185">Reference proteome</keyword>
<keyword id="KW-0694">RNA-binding</keyword>
<feature type="chain" id="PRO_0000057089" description="mRNA-decapping protein g5R">
    <location>
        <begin position="1"/>
        <end position="250"/>
    </location>
</feature>
<feature type="domain" description="Nudix hydrolase" evidence="2">
    <location>
        <begin position="97"/>
        <end position="239"/>
    </location>
</feature>
<feature type="short sequence motif" description="Nudix box" evidence="2">
    <location>
        <begin position="132"/>
        <end position="153"/>
    </location>
</feature>
<feature type="active site" description="Nucleophile" evidence="10">
    <location>
        <position position="147"/>
    </location>
</feature>
<feature type="binding site" evidence="1">
    <location>
        <position position="138"/>
    </location>
    <ligand>
        <name>Mg(2+)</name>
        <dbReference type="ChEBI" id="CHEBI:18420"/>
    </ligand>
</feature>
<feature type="binding site" evidence="9">
    <location>
        <position position="151"/>
    </location>
    <ligand>
        <name>Mg(2+)</name>
        <dbReference type="ChEBI" id="CHEBI:18420"/>
    </ligand>
</feature>
<feature type="binding site" evidence="1">
    <location>
        <position position="173"/>
    </location>
    <ligand>
        <name>Mg(2+)</name>
        <dbReference type="ChEBI" id="CHEBI:18420"/>
    </ligand>
</feature>
<feature type="mutagenesis site" description="Complete loss of mRNA-decapping activity." evidence="4">
    <original>E</original>
    <variation>Q</variation>
    <location>
        <position position="147"/>
    </location>
</feature>
<feature type="mutagenesis site" description="Complete loss of mRNA-decapping activity." evidence="4">
    <original>EE</original>
    <variation>QQ</variation>
    <location>
        <begin position="150"/>
        <end position="151"/>
    </location>
</feature>
<feature type="strand" evidence="12">
    <location>
        <begin position="6"/>
        <end position="19"/>
    </location>
</feature>
<feature type="turn" evidence="12">
    <location>
        <begin position="20"/>
        <end position="23"/>
    </location>
</feature>
<feature type="strand" evidence="12">
    <location>
        <begin position="24"/>
        <end position="34"/>
    </location>
</feature>
<feature type="helix" evidence="12">
    <location>
        <begin position="36"/>
        <end position="42"/>
    </location>
</feature>
<feature type="strand" evidence="11">
    <location>
        <begin position="48"/>
        <end position="50"/>
    </location>
</feature>
<feature type="helix" evidence="12">
    <location>
        <begin position="52"/>
        <end position="60"/>
    </location>
</feature>
<feature type="helix" evidence="12">
    <location>
        <begin position="64"/>
        <end position="71"/>
    </location>
</feature>
<feature type="helix" evidence="12">
    <location>
        <begin position="75"/>
        <end position="83"/>
    </location>
</feature>
<feature type="helix" evidence="12">
    <location>
        <begin position="89"/>
        <end position="103"/>
    </location>
</feature>
<feature type="turn" evidence="12">
    <location>
        <begin position="104"/>
        <end position="109"/>
    </location>
</feature>
<feature type="helix" evidence="12">
    <location>
        <begin position="110"/>
        <end position="118"/>
    </location>
</feature>
<feature type="helix" evidence="12">
    <location>
        <begin position="140"/>
        <end position="152"/>
    </location>
</feature>
<feature type="helix" evidence="12">
    <location>
        <begin position="156"/>
        <end position="158"/>
    </location>
</feature>
<feature type="strand" evidence="12">
    <location>
        <begin position="159"/>
        <end position="161"/>
    </location>
</feature>
<feature type="strand" evidence="12">
    <location>
        <begin position="167"/>
        <end position="172"/>
    </location>
</feature>
<feature type="strand" evidence="12">
    <location>
        <begin position="174"/>
        <end position="187"/>
    </location>
</feature>
<feature type="helix" evidence="12">
    <location>
        <begin position="194"/>
        <end position="197"/>
    </location>
</feature>
<feature type="helix" evidence="12">
    <location>
        <begin position="203"/>
        <end position="206"/>
    </location>
</feature>
<feature type="strand" evidence="12">
    <location>
        <begin position="207"/>
        <end position="216"/>
    </location>
</feature>
<feature type="helix" evidence="12">
    <location>
        <begin position="217"/>
        <end position="224"/>
    </location>
</feature>
<feature type="strand" evidence="12">
    <location>
        <begin position="227"/>
        <end position="229"/>
    </location>
</feature>
<feature type="helix" evidence="12">
    <location>
        <begin position="232"/>
        <end position="246"/>
    </location>
</feature>
<organism>
    <name type="scientific">African swine fever virus (strain Badajoz 1971 Vero-adapted)</name>
    <name type="common">Ba71V</name>
    <name type="synonym">ASFV</name>
    <dbReference type="NCBI Taxonomy" id="10498"/>
    <lineage>
        <taxon>Viruses</taxon>
        <taxon>Varidnaviria</taxon>
        <taxon>Bamfordvirae</taxon>
        <taxon>Nucleocytoviricota</taxon>
        <taxon>Pokkesviricetes</taxon>
        <taxon>Asfuvirales</taxon>
        <taxon>Asfarviridae</taxon>
        <taxon>Asfivirus</taxon>
        <taxon>African swine fever virus</taxon>
    </lineage>
</organism>
<protein>
    <recommendedName>
        <fullName evidence="7">mRNA-decapping protein g5R</fullName>
        <shortName>g5Rp</shortName>
        <ecNumber evidence="4">3.1.3.-</ecNumber>
    </recommendedName>
    <alternativeName>
        <fullName evidence="8">ASFV-DP</fullName>
    </alternativeName>
    <alternativeName>
        <fullName>Diphosphoinositol polyphosphate phosphohydrolase</fullName>
        <shortName>DIPP</shortName>
        <ecNumber evidence="3">3.6.1.52</ecNumber>
    </alternativeName>
</protein>
<reference key="1">
    <citation type="journal article" date="1993" name="Virology">
        <title>African swine fever virus guanylyltransferase.</title>
        <authorList>
            <person name="Pena L."/>
            <person name="Yanez R.J."/>
            <person name="Revilla Y."/>
            <person name="Vinuela E."/>
            <person name="Salas M.L."/>
        </authorList>
    </citation>
    <scope>NUCLEOTIDE SEQUENCE [GENOMIC DNA]</scope>
</reference>
<reference key="2">
    <citation type="journal article" date="1995" name="Virology">
        <title>Analysis of the complete nucleotide sequence of African swine fever virus.</title>
        <authorList>
            <person name="Yanez R.J."/>
            <person name="Rodriguez J.M."/>
            <person name="Nogal M.L."/>
            <person name="Yuste L."/>
            <person name="Enriquez C."/>
            <person name="Rodriguez J.F."/>
            <person name="Vinuela E."/>
        </authorList>
    </citation>
    <scope>NUCLEOTIDE SEQUENCE [LARGE SCALE GENOMIC DNA]</scope>
</reference>
<reference key="3">
    <citation type="journal article" date="2002" name="J. Virol.">
        <title>The g5R (D250) gene of African swine fever virus encodes a Nudix hydrolase that preferentially degrades diphosphoinositol polyphosphates.</title>
        <authorList>
            <person name="Cartwright J.L."/>
            <person name="Safrany S.T."/>
            <person name="Dixon L.K."/>
            <person name="Darzynkiewicz E."/>
            <person name="Stepinski J."/>
            <person name="Burke R."/>
            <person name="McLennan A.G."/>
        </authorList>
    </citation>
    <scope>CHARACTERIZATION</scope>
    <scope>CATALYTIC ACTIVITY</scope>
    <scope>FUNCTION</scope>
    <scope>SUBCELLULAR LOCATION</scope>
    <scope>COFACTOR</scope>
    <scope>BIOPHYSICOCHEMICAL PROPERTIES</scope>
</reference>
<reference key="4">
    <citation type="journal article" date="2009" name="Virology">
        <title>The African swine fever virus g5R protein possesses mRNA decapping activity.</title>
        <authorList>
            <person name="Parrish S."/>
            <person name="Hurchalla M."/>
            <person name="Liu S.-W."/>
            <person name="Moss B."/>
        </authorList>
    </citation>
    <scope>FUNCTION</scope>
    <scope>MUTAGENESIS OF GLU-147 AND 150-GLU-GLU-151</scope>
    <scope>RNA-BINDING</scope>
    <scope>CATALYTIC ACTIVITY</scope>
    <scope>ACTIVE SITE</scope>
</reference>
<reference key="5">
    <citation type="journal article" date="2017" name="J. Virol.">
        <title>Characterization of the African Swine Fever Virus Decapping Enzyme during Infection.</title>
        <authorList>
            <person name="Quintas A."/>
            <person name="Perez-Nunez D."/>
            <person name="Sanchez E.G."/>
            <person name="Nogal M.L."/>
            <person name="Hentze M.W."/>
            <person name="Castello A."/>
            <person name="Revilla Y."/>
        </authorList>
    </citation>
    <scope>FUNCTION</scope>
    <scope>SUBCELLULAR LOCATION</scope>
    <scope>RNA-BINDING</scope>
    <scope>INDUCTION</scope>
    <scope>INTERACTION WITH HOST RPL23A</scope>
</reference>
<reference key="6">
    <citation type="journal article" date="2013" name="Virus Res.">
        <title>African swine fever virus transcription.</title>
        <authorList>
            <person name="Rodriguez J.M."/>
            <person name="Salas M.L."/>
        </authorList>
    </citation>
    <scope>REVIEW</scope>
</reference>
<reference key="7">
    <citation type="journal article" date="2020" name="J. Virol.">
        <title>The African Swine Fever Virus Transcriptome.</title>
        <authorList>
            <person name="Cackett G."/>
            <person name="Matelska D."/>
            <person name="Sykora M."/>
            <person name="Portugal R."/>
            <person name="Malecki M."/>
            <person name="Baehler J."/>
            <person name="Dixon L."/>
            <person name="Werner F."/>
        </authorList>
    </citation>
    <scope>INDUCTION</scope>
</reference>
<proteinExistence type="evidence at protein level"/>